<protein>
    <recommendedName>
        <fullName evidence="2">Small ribosomal subunit protein uS2c</fullName>
    </recommendedName>
    <alternativeName>
        <fullName>30S ribosomal protein S2, chloroplastic</fullName>
    </alternativeName>
</protein>
<feature type="chain" id="PRO_0000352167" description="Small ribosomal subunit protein uS2c">
    <location>
        <begin position="1"/>
        <end position="243"/>
    </location>
</feature>
<feature type="region of interest" description="Disordered" evidence="1">
    <location>
        <begin position="224"/>
        <end position="243"/>
    </location>
</feature>
<proteinExistence type="inferred from homology"/>
<geneLocation type="chloroplast"/>
<gene>
    <name type="primary">rps2</name>
</gene>
<reference key="1">
    <citation type="journal article" date="2007" name="Mol. Biol. Evol.">
        <title>Plastid genome sequence of the cryptophyte alga Rhodomonas salina CCMP1319: lateral transfer of putative DNA replication machinery and a test of chromist plastid phylogeny.</title>
        <authorList>
            <person name="Khan H."/>
            <person name="Parks N."/>
            <person name="Kozera C."/>
            <person name="Curtis B.A."/>
            <person name="Parsons B.J."/>
            <person name="Bowman S."/>
            <person name="Archibald J.M."/>
        </authorList>
    </citation>
    <scope>NUCLEOTIDE SEQUENCE [LARGE SCALE GENOMIC DNA]</scope>
    <source>
        <strain>CCMP1319 / NEPCC76 / CS-174</strain>
    </source>
</reference>
<accession>A6MVX1</accession>
<comment type="subcellular location">
    <subcellularLocation>
        <location>Plastid</location>
        <location>Chloroplast</location>
    </subcellularLocation>
</comment>
<comment type="similarity">
    <text evidence="2">Belongs to the universal ribosomal protein uS2 family.</text>
</comment>
<organism>
    <name type="scientific">Rhodomonas salina</name>
    <name type="common">Cryptomonas salina</name>
    <dbReference type="NCBI Taxonomy" id="52970"/>
    <lineage>
        <taxon>Eukaryota</taxon>
        <taxon>Cryptophyceae</taxon>
        <taxon>Pyrenomonadales</taxon>
        <taxon>Pyrenomonadaceae</taxon>
        <taxon>Rhodomonas</taxon>
    </lineage>
</organism>
<name>RR2_RHDSA</name>
<dbReference type="EMBL" id="EF508371">
    <property type="protein sequence ID" value="ABO70814.1"/>
    <property type="molecule type" value="Genomic_DNA"/>
</dbReference>
<dbReference type="RefSeq" id="YP_001293550.1">
    <property type="nucleotide sequence ID" value="NC_009573.1"/>
</dbReference>
<dbReference type="SMR" id="A6MVX1"/>
<dbReference type="GeneID" id="5228629"/>
<dbReference type="GO" id="GO:0009507">
    <property type="term" value="C:chloroplast"/>
    <property type="evidence" value="ECO:0007669"/>
    <property type="project" value="UniProtKB-SubCell"/>
</dbReference>
<dbReference type="GO" id="GO:0022627">
    <property type="term" value="C:cytosolic small ribosomal subunit"/>
    <property type="evidence" value="ECO:0007669"/>
    <property type="project" value="TreeGrafter"/>
</dbReference>
<dbReference type="GO" id="GO:0003735">
    <property type="term" value="F:structural constituent of ribosome"/>
    <property type="evidence" value="ECO:0007669"/>
    <property type="project" value="InterPro"/>
</dbReference>
<dbReference type="GO" id="GO:0006412">
    <property type="term" value="P:translation"/>
    <property type="evidence" value="ECO:0007669"/>
    <property type="project" value="UniProtKB-UniRule"/>
</dbReference>
<dbReference type="CDD" id="cd01425">
    <property type="entry name" value="RPS2"/>
    <property type="match status" value="1"/>
</dbReference>
<dbReference type="FunFam" id="1.10.287.610:FF:000001">
    <property type="entry name" value="30S ribosomal protein S2"/>
    <property type="match status" value="1"/>
</dbReference>
<dbReference type="Gene3D" id="3.40.50.10490">
    <property type="entry name" value="Glucose-6-phosphate isomerase like protein, domain 1"/>
    <property type="match status" value="1"/>
</dbReference>
<dbReference type="Gene3D" id="1.10.287.610">
    <property type="entry name" value="Helix hairpin bin"/>
    <property type="match status" value="1"/>
</dbReference>
<dbReference type="HAMAP" id="MF_00291_B">
    <property type="entry name" value="Ribosomal_uS2_B"/>
    <property type="match status" value="1"/>
</dbReference>
<dbReference type="InterPro" id="IPR001865">
    <property type="entry name" value="Ribosomal_uS2"/>
</dbReference>
<dbReference type="InterPro" id="IPR005706">
    <property type="entry name" value="Ribosomal_uS2_bac/mit/plastid"/>
</dbReference>
<dbReference type="InterPro" id="IPR018130">
    <property type="entry name" value="Ribosomal_uS2_CS"/>
</dbReference>
<dbReference type="InterPro" id="IPR023591">
    <property type="entry name" value="Ribosomal_uS2_flav_dom_sf"/>
</dbReference>
<dbReference type="NCBIfam" id="TIGR01011">
    <property type="entry name" value="rpsB_bact"/>
    <property type="match status" value="1"/>
</dbReference>
<dbReference type="PANTHER" id="PTHR12534">
    <property type="entry name" value="30S RIBOSOMAL PROTEIN S2 PROKARYOTIC AND ORGANELLAR"/>
    <property type="match status" value="1"/>
</dbReference>
<dbReference type="PANTHER" id="PTHR12534:SF0">
    <property type="entry name" value="SMALL RIBOSOMAL SUBUNIT PROTEIN US2M"/>
    <property type="match status" value="1"/>
</dbReference>
<dbReference type="Pfam" id="PF00318">
    <property type="entry name" value="Ribosomal_S2"/>
    <property type="match status" value="1"/>
</dbReference>
<dbReference type="PRINTS" id="PR00395">
    <property type="entry name" value="RIBOSOMALS2"/>
</dbReference>
<dbReference type="SUPFAM" id="SSF52313">
    <property type="entry name" value="Ribosomal protein S2"/>
    <property type="match status" value="1"/>
</dbReference>
<dbReference type="PROSITE" id="PS00962">
    <property type="entry name" value="RIBOSOMAL_S2_1"/>
    <property type="match status" value="1"/>
</dbReference>
<dbReference type="PROSITE" id="PS00963">
    <property type="entry name" value="RIBOSOMAL_S2_2"/>
    <property type="match status" value="1"/>
</dbReference>
<keyword id="KW-0150">Chloroplast</keyword>
<keyword id="KW-0934">Plastid</keyword>
<keyword id="KW-0687">Ribonucleoprotein</keyword>
<keyword id="KW-0689">Ribosomal protein</keyword>
<evidence type="ECO:0000256" key="1">
    <source>
        <dbReference type="SAM" id="MobiDB-lite"/>
    </source>
</evidence>
<evidence type="ECO:0000305" key="2"/>
<sequence length="243" mass="27390">MAVVTLAELLEAGVHFGHQSRRWNPKMFPYIYAERNGIHIIDLVQTAQLLTQACDFVRTASEQGKSFLFVGTKRQAAAVVAQEAERCGAYYVNQRWLGGILTNWFTIRTRVERLKDLENKEESGYLDQLPKKETAILRRELEKLRKNLDGIKTMKRLPDLVVVVDQKRESTAVQECRKLGIPIVSILDTNCNPELADIPIPANDDAIRSIKLILGKIADSISEGNNGKVSSDQEDTQELQTVQ</sequence>